<dbReference type="EMBL" id="CP000246">
    <property type="protein sequence ID" value="ABG84058.1"/>
    <property type="molecule type" value="Genomic_DNA"/>
</dbReference>
<dbReference type="RefSeq" id="WP_003454257.1">
    <property type="nucleotide sequence ID" value="NC_008261.1"/>
</dbReference>
<dbReference type="SMR" id="Q0TMQ7"/>
<dbReference type="STRING" id="195103.CPF_2703"/>
<dbReference type="PaxDb" id="195103-CPF_2703"/>
<dbReference type="GeneID" id="93001020"/>
<dbReference type="KEGG" id="cpf:CPF_2703"/>
<dbReference type="eggNOG" id="COG0198">
    <property type="taxonomic scope" value="Bacteria"/>
</dbReference>
<dbReference type="HOGENOM" id="CLU_093315_2_3_9"/>
<dbReference type="Proteomes" id="UP000001823">
    <property type="component" value="Chromosome"/>
</dbReference>
<dbReference type="GO" id="GO:1990904">
    <property type="term" value="C:ribonucleoprotein complex"/>
    <property type="evidence" value="ECO:0007669"/>
    <property type="project" value="UniProtKB-KW"/>
</dbReference>
<dbReference type="GO" id="GO:0005840">
    <property type="term" value="C:ribosome"/>
    <property type="evidence" value="ECO:0007669"/>
    <property type="project" value="UniProtKB-KW"/>
</dbReference>
<dbReference type="GO" id="GO:0019843">
    <property type="term" value="F:rRNA binding"/>
    <property type="evidence" value="ECO:0007669"/>
    <property type="project" value="UniProtKB-UniRule"/>
</dbReference>
<dbReference type="GO" id="GO:0003735">
    <property type="term" value="F:structural constituent of ribosome"/>
    <property type="evidence" value="ECO:0007669"/>
    <property type="project" value="InterPro"/>
</dbReference>
<dbReference type="GO" id="GO:0006412">
    <property type="term" value="P:translation"/>
    <property type="evidence" value="ECO:0007669"/>
    <property type="project" value="UniProtKB-UniRule"/>
</dbReference>
<dbReference type="CDD" id="cd06089">
    <property type="entry name" value="KOW_RPL26"/>
    <property type="match status" value="1"/>
</dbReference>
<dbReference type="FunFam" id="2.30.30.30:FF:000004">
    <property type="entry name" value="50S ribosomal protein L24"/>
    <property type="match status" value="1"/>
</dbReference>
<dbReference type="Gene3D" id="2.30.30.30">
    <property type="match status" value="1"/>
</dbReference>
<dbReference type="HAMAP" id="MF_01326_B">
    <property type="entry name" value="Ribosomal_uL24_B"/>
    <property type="match status" value="1"/>
</dbReference>
<dbReference type="InterPro" id="IPR005824">
    <property type="entry name" value="KOW"/>
</dbReference>
<dbReference type="InterPro" id="IPR014722">
    <property type="entry name" value="Rib_uL2_dom2"/>
</dbReference>
<dbReference type="InterPro" id="IPR003256">
    <property type="entry name" value="Ribosomal_uL24"/>
</dbReference>
<dbReference type="InterPro" id="IPR005825">
    <property type="entry name" value="Ribosomal_uL24_CS"/>
</dbReference>
<dbReference type="InterPro" id="IPR041988">
    <property type="entry name" value="Ribosomal_uL24_KOW"/>
</dbReference>
<dbReference type="InterPro" id="IPR008991">
    <property type="entry name" value="Translation_prot_SH3-like_sf"/>
</dbReference>
<dbReference type="NCBIfam" id="TIGR01079">
    <property type="entry name" value="rplX_bact"/>
    <property type="match status" value="1"/>
</dbReference>
<dbReference type="PANTHER" id="PTHR12903">
    <property type="entry name" value="MITOCHONDRIAL RIBOSOMAL PROTEIN L24"/>
    <property type="match status" value="1"/>
</dbReference>
<dbReference type="Pfam" id="PF00467">
    <property type="entry name" value="KOW"/>
    <property type="match status" value="1"/>
</dbReference>
<dbReference type="Pfam" id="PF17136">
    <property type="entry name" value="ribosomal_L24"/>
    <property type="match status" value="1"/>
</dbReference>
<dbReference type="SMART" id="SM00739">
    <property type="entry name" value="KOW"/>
    <property type="match status" value="1"/>
</dbReference>
<dbReference type="SUPFAM" id="SSF50104">
    <property type="entry name" value="Translation proteins SH3-like domain"/>
    <property type="match status" value="1"/>
</dbReference>
<dbReference type="PROSITE" id="PS01108">
    <property type="entry name" value="RIBOSOMAL_L24"/>
    <property type="match status" value="1"/>
</dbReference>
<reference key="1">
    <citation type="journal article" date="2006" name="Genome Res.">
        <title>Skewed genomic variability in strains of the toxigenic bacterial pathogen, Clostridium perfringens.</title>
        <authorList>
            <person name="Myers G.S.A."/>
            <person name="Rasko D.A."/>
            <person name="Cheung J.K."/>
            <person name="Ravel J."/>
            <person name="Seshadri R."/>
            <person name="DeBoy R.T."/>
            <person name="Ren Q."/>
            <person name="Varga J."/>
            <person name="Awad M.M."/>
            <person name="Brinkac L.M."/>
            <person name="Daugherty S.C."/>
            <person name="Haft D.H."/>
            <person name="Dodson R.J."/>
            <person name="Madupu R."/>
            <person name="Nelson W.C."/>
            <person name="Rosovitz M.J."/>
            <person name="Sullivan S.A."/>
            <person name="Khouri H."/>
            <person name="Dimitrov G.I."/>
            <person name="Watkins K.L."/>
            <person name="Mulligan S."/>
            <person name="Benton J."/>
            <person name="Radune D."/>
            <person name="Fisher D.J."/>
            <person name="Atkins H.S."/>
            <person name="Hiscox T."/>
            <person name="Jost B.H."/>
            <person name="Billington S.J."/>
            <person name="Songer J.G."/>
            <person name="McClane B.A."/>
            <person name="Titball R.W."/>
            <person name="Rood J.I."/>
            <person name="Melville S.B."/>
            <person name="Paulsen I.T."/>
        </authorList>
    </citation>
    <scope>NUCLEOTIDE SEQUENCE [LARGE SCALE GENOMIC DNA]</scope>
    <source>
        <strain>ATCC 13124 / DSM 756 / JCM 1290 / NCIMB 6125 / NCTC 8237 / S 107 / Type A</strain>
    </source>
</reference>
<evidence type="ECO:0000255" key="1">
    <source>
        <dbReference type="HAMAP-Rule" id="MF_01326"/>
    </source>
</evidence>
<evidence type="ECO:0000305" key="2"/>
<accession>Q0TMQ7</accession>
<proteinExistence type="inferred from homology"/>
<feature type="chain" id="PRO_0000355667" description="Large ribosomal subunit protein uL24">
    <location>
        <begin position="1"/>
        <end position="104"/>
    </location>
</feature>
<keyword id="KW-0687">Ribonucleoprotein</keyword>
<keyword id="KW-0689">Ribosomal protein</keyword>
<keyword id="KW-0694">RNA-binding</keyword>
<keyword id="KW-0699">rRNA-binding</keyword>
<gene>
    <name evidence="1" type="primary">rplX</name>
    <name type="ordered locus">CPF_2703</name>
</gene>
<organism>
    <name type="scientific">Clostridium perfringens (strain ATCC 13124 / DSM 756 / JCM 1290 / NCIMB 6125 / NCTC 8237 / Type A)</name>
    <dbReference type="NCBI Taxonomy" id="195103"/>
    <lineage>
        <taxon>Bacteria</taxon>
        <taxon>Bacillati</taxon>
        <taxon>Bacillota</taxon>
        <taxon>Clostridia</taxon>
        <taxon>Eubacteriales</taxon>
        <taxon>Clostridiaceae</taxon>
        <taxon>Clostridium</taxon>
    </lineage>
</organism>
<comment type="function">
    <text evidence="1">One of two assembly initiator proteins, it binds directly to the 5'-end of the 23S rRNA, where it nucleates assembly of the 50S subunit.</text>
</comment>
<comment type="function">
    <text evidence="1">One of the proteins that surrounds the polypeptide exit tunnel on the outside of the subunit.</text>
</comment>
<comment type="subunit">
    <text evidence="1">Part of the 50S ribosomal subunit.</text>
</comment>
<comment type="similarity">
    <text evidence="1">Belongs to the universal ribosomal protein uL24 family.</text>
</comment>
<sequence length="104" mass="11530">MKVHVRKNDTVVVISGKDKGKTGEVLRVIPKTGKVVVKGVNLVKKHQKPNRQNMQGGIIEMEAAINSSKVMLFCEKCKKATRISHKLLEDGAKVRVCKKCGETF</sequence>
<name>RL24_CLOP1</name>
<protein>
    <recommendedName>
        <fullName evidence="1">Large ribosomal subunit protein uL24</fullName>
    </recommendedName>
    <alternativeName>
        <fullName evidence="2">50S ribosomal protein L24</fullName>
    </alternativeName>
</protein>